<reference evidence="3" key="1">
    <citation type="journal article" date="2004" name="J. Insect Biotechnol. Sericology">
        <title>Growth suppression of rat heptatoma cells by a pentapeptide from Antheraea yamamai.</title>
        <authorList>
            <person name="Yang P."/>
            <person name="Abe S."/>
            <person name="Zhao Y."/>
            <person name="An Y."/>
            <person name="Suzuki K."/>
        </authorList>
    </citation>
    <scope>PROTEIN SEQUENCE</scope>
    <scope>FUNCTION</scope>
    <scope>DEVELOPMENTAL STAGE</scope>
    <scope>AMIDATION AT GLY-5</scope>
</reference>
<reference evidence="3" key="2">
    <citation type="journal article" date="2007" name="J. Insect Biotechnol. Sericology">
        <title>A palmitonyl conjugate of an insect pentapeptide causes growth arrest in mammalian cells and mimics the action of diapause hormone.</title>
        <authorList>
            <person name="Yang P."/>
            <person name="Abe S."/>
            <person name="Sato Y."/>
            <person name="Yamashita T."/>
            <person name="Matsuda F."/>
            <person name="Hamayasu T."/>
            <person name="Imai K."/>
            <person name="Suzuki K."/>
        </authorList>
    </citation>
    <scope>PROTEIN SEQUENCE</scope>
    <scope>MASS SPECTROMETRY</scope>
    <scope>AMIDATION AT GLY-5</scope>
    <source>
        <tissue evidence="2">Larva</tissue>
    </source>
</reference>
<accession>P84863</accession>
<evidence type="ECO:0000269" key="1">
    <source ref="1"/>
</evidence>
<evidence type="ECO:0000269" key="2">
    <source ref="2"/>
</evidence>
<evidence type="ECO:0000305" key="3"/>
<comment type="function">
    <text evidence="1">Suppresses growth in rat hepatoma cells and maintains diapause in insects.</text>
</comment>
<comment type="developmental stage">
    <text evidence="1">Diapause.</text>
</comment>
<comment type="PTM">
    <text evidence="1 2">Diapausing first instar larvae contain both amidated and non-amidated forms.</text>
</comment>
<comment type="mass spectrometry" mass="571.858" method="MALDI" evidence="2">
    <text>With amidation at Gly-5.</text>
</comment>
<comment type="mass spectrometry" mass="572.846" method="MALDI" evidence="2">
    <text>Without amidation at Gly-5.</text>
</comment>
<name>PENT_ANTYA</name>
<keyword id="KW-0027">Amidation</keyword>
<keyword id="KW-0903">Direct protein sequencing</keyword>
<keyword id="KW-0341">Growth regulation</keyword>
<organism>
    <name type="scientific">Antheraea yamamai</name>
    <name type="common">Japanese oak silkmoth</name>
    <dbReference type="NCBI Taxonomy" id="7121"/>
    <lineage>
        <taxon>Eukaryota</taxon>
        <taxon>Metazoa</taxon>
        <taxon>Ecdysozoa</taxon>
        <taxon>Arthropoda</taxon>
        <taxon>Hexapoda</taxon>
        <taxon>Insecta</taxon>
        <taxon>Pterygota</taxon>
        <taxon>Neoptera</taxon>
        <taxon>Endopterygota</taxon>
        <taxon>Lepidoptera</taxon>
        <taxon>Glossata</taxon>
        <taxon>Ditrysia</taxon>
        <taxon>Bombycoidea</taxon>
        <taxon>Saturniidae</taxon>
        <taxon>Saturniinae</taxon>
        <taxon>Saturniini</taxon>
        <taxon>Antheraea</taxon>
    </lineage>
</organism>
<proteinExistence type="evidence at protein level"/>
<sequence length="5" mass="573">DILRG</sequence>
<protein>
    <recommendedName>
        <fullName>Yamamarin</fullName>
    </recommendedName>
    <alternativeName>
        <fullName>Growth-suppressing pentapeptide</fullName>
    </alternativeName>
</protein>
<feature type="peptide" id="PRO_0000245164" description="Yamamarin" evidence="2">
    <location>
        <begin position="1"/>
        <end position="5"/>
    </location>
</feature>
<feature type="modified residue" description="Glycine amide; partial" evidence="1 2">
    <location>
        <position position="5"/>
    </location>
</feature>